<accession>Q1QAD8</accession>
<proteinExistence type="inferred from homology"/>
<dbReference type="EC" id="3.5.4.13" evidence="1"/>
<dbReference type="EMBL" id="CP000323">
    <property type="protein sequence ID" value="ABE75365.1"/>
    <property type="molecule type" value="Genomic_DNA"/>
</dbReference>
<dbReference type="RefSeq" id="WP_011513914.1">
    <property type="nucleotide sequence ID" value="NC_007969.1"/>
</dbReference>
<dbReference type="SMR" id="Q1QAD8"/>
<dbReference type="STRING" id="335284.Pcryo_1588"/>
<dbReference type="GeneID" id="60254581"/>
<dbReference type="KEGG" id="pcr:Pcryo_1588"/>
<dbReference type="eggNOG" id="COG0717">
    <property type="taxonomic scope" value="Bacteria"/>
</dbReference>
<dbReference type="HOGENOM" id="CLU_087476_4_0_6"/>
<dbReference type="UniPathway" id="UPA00610">
    <property type="reaction ID" value="UER00665"/>
</dbReference>
<dbReference type="Proteomes" id="UP000002425">
    <property type="component" value="Chromosome"/>
</dbReference>
<dbReference type="GO" id="GO:0008829">
    <property type="term" value="F:dCTP deaminase activity"/>
    <property type="evidence" value="ECO:0007669"/>
    <property type="project" value="UniProtKB-UniRule"/>
</dbReference>
<dbReference type="GO" id="GO:0000166">
    <property type="term" value="F:nucleotide binding"/>
    <property type="evidence" value="ECO:0007669"/>
    <property type="project" value="UniProtKB-KW"/>
</dbReference>
<dbReference type="GO" id="GO:0006226">
    <property type="term" value="P:dUMP biosynthetic process"/>
    <property type="evidence" value="ECO:0007669"/>
    <property type="project" value="UniProtKB-UniPathway"/>
</dbReference>
<dbReference type="GO" id="GO:0006229">
    <property type="term" value="P:dUTP biosynthetic process"/>
    <property type="evidence" value="ECO:0007669"/>
    <property type="project" value="UniProtKB-UniRule"/>
</dbReference>
<dbReference type="GO" id="GO:0015949">
    <property type="term" value="P:nucleobase-containing small molecule interconversion"/>
    <property type="evidence" value="ECO:0007669"/>
    <property type="project" value="TreeGrafter"/>
</dbReference>
<dbReference type="CDD" id="cd07557">
    <property type="entry name" value="trimeric_dUTPase"/>
    <property type="match status" value="1"/>
</dbReference>
<dbReference type="FunFam" id="2.70.40.10:FF:000001">
    <property type="entry name" value="dCTP deaminase"/>
    <property type="match status" value="1"/>
</dbReference>
<dbReference type="Gene3D" id="2.70.40.10">
    <property type="match status" value="1"/>
</dbReference>
<dbReference type="HAMAP" id="MF_00146">
    <property type="entry name" value="dCTP_deaminase"/>
    <property type="match status" value="1"/>
</dbReference>
<dbReference type="InterPro" id="IPR011962">
    <property type="entry name" value="dCTP_deaminase"/>
</dbReference>
<dbReference type="InterPro" id="IPR036157">
    <property type="entry name" value="dUTPase-like_sf"/>
</dbReference>
<dbReference type="InterPro" id="IPR033704">
    <property type="entry name" value="dUTPase_trimeric"/>
</dbReference>
<dbReference type="NCBIfam" id="TIGR02274">
    <property type="entry name" value="dCTP_deam"/>
    <property type="match status" value="1"/>
</dbReference>
<dbReference type="PANTHER" id="PTHR42680">
    <property type="entry name" value="DCTP DEAMINASE"/>
    <property type="match status" value="1"/>
</dbReference>
<dbReference type="PANTHER" id="PTHR42680:SF3">
    <property type="entry name" value="DCTP DEAMINASE"/>
    <property type="match status" value="1"/>
</dbReference>
<dbReference type="Pfam" id="PF22769">
    <property type="entry name" value="DCD"/>
    <property type="match status" value="1"/>
</dbReference>
<dbReference type="SUPFAM" id="SSF51283">
    <property type="entry name" value="dUTPase-like"/>
    <property type="match status" value="1"/>
</dbReference>
<keyword id="KW-0378">Hydrolase</keyword>
<keyword id="KW-0546">Nucleotide metabolism</keyword>
<keyword id="KW-0547">Nucleotide-binding</keyword>
<sequence>MSIKSDRWIRKMAEEHGMIEPFEAGQVRFNDAGERLVSYGTSSYGYDVRCAPEFKVFTNVHSVIVDPKNFDEKSFIDVIGDECIIPPNSFALARTMEYFRIPRDVLTICLGKSTYARCGIIVNVTPLEPEWEGHVTLEFSNTTNLPARIYAGEGVAQMLFFQSDADDVCETSYKDRGGKYQGQRGVTLPRT</sequence>
<reference key="1">
    <citation type="submission" date="2006-03" db="EMBL/GenBank/DDBJ databases">
        <title>Complete sequence of chromosome of Psychrobacter cryohalolentis K5.</title>
        <authorList>
            <consortium name="US DOE Joint Genome Institute"/>
            <person name="Copeland A."/>
            <person name="Lucas S."/>
            <person name="Lapidus A."/>
            <person name="Barry K."/>
            <person name="Detter J.C."/>
            <person name="Glavina T."/>
            <person name="Hammon N."/>
            <person name="Israni S."/>
            <person name="Dalin E."/>
            <person name="Tice H."/>
            <person name="Pitluck S."/>
            <person name="Brettin T."/>
            <person name="Bruce D."/>
            <person name="Han C."/>
            <person name="Tapia R."/>
            <person name="Sims D.R."/>
            <person name="Gilna P."/>
            <person name="Schmutz J."/>
            <person name="Larimer F."/>
            <person name="Land M."/>
            <person name="Hauser L."/>
            <person name="Kyrpides N."/>
            <person name="Kim E."/>
            <person name="Richardson P."/>
        </authorList>
    </citation>
    <scope>NUCLEOTIDE SEQUENCE [LARGE SCALE GENOMIC DNA]</scope>
    <source>
        <strain>ATCC BAA-1226 / DSM 17306 / VKM B-2378 / K5</strain>
    </source>
</reference>
<gene>
    <name evidence="1" type="primary">dcd</name>
    <name type="ordered locus">Pcryo_1588</name>
</gene>
<comment type="function">
    <text evidence="1">Catalyzes the deamination of dCTP to dUTP.</text>
</comment>
<comment type="catalytic activity">
    <reaction evidence="1">
        <text>dCTP + H2O + H(+) = dUTP + NH4(+)</text>
        <dbReference type="Rhea" id="RHEA:22680"/>
        <dbReference type="ChEBI" id="CHEBI:15377"/>
        <dbReference type="ChEBI" id="CHEBI:15378"/>
        <dbReference type="ChEBI" id="CHEBI:28938"/>
        <dbReference type="ChEBI" id="CHEBI:61481"/>
        <dbReference type="ChEBI" id="CHEBI:61555"/>
        <dbReference type="EC" id="3.5.4.13"/>
    </reaction>
</comment>
<comment type="pathway">
    <text evidence="1">Pyrimidine metabolism; dUMP biosynthesis; dUMP from dCTP (dUTP route): step 1/2.</text>
</comment>
<comment type="subunit">
    <text evidence="1">Homotrimer.</text>
</comment>
<comment type="similarity">
    <text evidence="1">Belongs to the dCTP deaminase family.</text>
</comment>
<name>DCD_PSYCK</name>
<organism>
    <name type="scientific">Psychrobacter cryohalolentis (strain ATCC BAA-1226 / DSM 17306 / VKM B-2378 / K5)</name>
    <dbReference type="NCBI Taxonomy" id="335284"/>
    <lineage>
        <taxon>Bacteria</taxon>
        <taxon>Pseudomonadati</taxon>
        <taxon>Pseudomonadota</taxon>
        <taxon>Gammaproteobacteria</taxon>
        <taxon>Moraxellales</taxon>
        <taxon>Moraxellaceae</taxon>
        <taxon>Psychrobacter</taxon>
    </lineage>
</organism>
<evidence type="ECO:0000255" key="1">
    <source>
        <dbReference type="HAMAP-Rule" id="MF_00146"/>
    </source>
</evidence>
<feature type="chain" id="PRO_1000009791" description="dCTP deaminase">
    <location>
        <begin position="1"/>
        <end position="191"/>
    </location>
</feature>
<feature type="active site" description="Proton donor/acceptor" evidence="1">
    <location>
        <position position="138"/>
    </location>
</feature>
<feature type="binding site" evidence="1">
    <location>
        <begin position="112"/>
        <end position="117"/>
    </location>
    <ligand>
        <name>dCTP</name>
        <dbReference type="ChEBI" id="CHEBI:61481"/>
    </ligand>
</feature>
<feature type="binding site" evidence="1">
    <location>
        <begin position="136"/>
        <end position="138"/>
    </location>
    <ligand>
        <name>dCTP</name>
        <dbReference type="ChEBI" id="CHEBI:61481"/>
    </ligand>
</feature>
<feature type="binding site" evidence="1">
    <location>
        <position position="157"/>
    </location>
    <ligand>
        <name>dCTP</name>
        <dbReference type="ChEBI" id="CHEBI:61481"/>
    </ligand>
</feature>
<feature type="binding site" evidence="1">
    <location>
        <position position="173"/>
    </location>
    <ligand>
        <name>dCTP</name>
        <dbReference type="ChEBI" id="CHEBI:61481"/>
    </ligand>
</feature>
<feature type="binding site" evidence="1">
    <location>
        <position position="183"/>
    </location>
    <ligand>
        <name>dCTP</name>
        <dbReference type="ChEBI" id="CHEBI:61481"/>
    </ligand>
</feature>
<protein>
    <recommendedName>
        <fullName evidence="1">dCTP deaminase</fullName>
        <ecNumber evidence="1">3.5.4.13</ecNumber>
    </recommendedName>
    <alternativeName>
        <fullName evidence="1">Deoxycytidine triphosphate deaminase</fullName>
    </alternativeName>
</protein>